<evidence type="ECO:0000255" key="1">
    <source>
        <dbReference type="HAMAP-Rule" id="MF_00082"/>
    </source>
</evidence>
<gene>
    <name evidence="1" type="primary">argB</name>
    <name type="ordered locus">PM1119</name>
</gene>
<reference key="1">
    <citation type="journal article" date="2001" name="Proc. Natl. Acad. Sci. U.S.A.">
        <title>Complete genomic sequence of Pasteurella multocida Pm70.</title>
        <authorList>
            <person name="May B.J."/>
            <person name="Zhang Q."/>
            <person name="Li L.L."/>
            <person name="Paustian M.L."/>
            <person name="Whittam T.S."/>
            <person name="Kapur V."/>
        </authorList>
    </citation>
    <scope>NUCLEOTIDE SEQUENCE [LARGE SCALE GENOMIC DNA]</scope>
    <source>
        <strain>Pm70</strain>
    </source>
</reference>
<protein>
    <recommendedName>
        <fullName evidence="1">Acetylglutamate kinase</fullName>
        <ecNumber evidence="1">2.7.2.8</ecNumber>
    </recommendedName>
    <alternativeName>
        <fullName evidence="1">N-acetyl-L-glutamate 5-phosphotransferase</fullName>
    </alternativeName>
    <alternativeName>
        <fullName evidence="1">NAG kinase</fullName>
        <shortName evidence="1">NAGK</shortName>
    </alternativeName>
</protein>
<accession>P57908</accession>
<name>ARGB_PASMU</name>
<sequence>MKPLVIKLGGVLLDTPAAMENLFTALANYQQNFDRPLVIVHGGGCIVDELMQRLHLPVQKKNGLRVTPSDHIEIITGALAGIANKTLVAQAAKFHLNPVGLCLADGNLTYATQLDPELGHVATVVPKNPALLNNLLGEAFLPIISSIAVDKQGLLMNVNADQAATAIAALIQADLVMLSDVDGVLDANKQRLPELNGAQIEQLIKDNVITDGMVVKVNAALDAAKMLNQGVDIANWKYPEKLTALFAGEIIGTRIKP</sequence>
<comment type="function">
    <text evidence="1">Catalyzes the ATP-dependent phosphorylation of N-acetyl-L-glutamate.</text>
</comment>
<comment type="catalytic activity">
    <reaction evidence="1">
        <text>N-acetyl-L-glutamate + ATP = N-acetyl-L-glutamyl 5-phosphate + ADP</text>
        <dbReference type="Rhea" id="RHEA:14629"/>
        <dbReference type="ChEBI" id="CHEBI:30616"/>
        <dbReference type="ChEBI" id="CHEBI:44337"/>
        <dbReference type="ChEBI" id="CHEBI:57936"/>
        <dbReference type="ChEBI" id="CHEBI:456216"/>
        <dbReference type="EC" id="2.7.2.8"/>
    </reaction>
</comment>
<comment type="pathway">
    <text evidence="1">Amino-acid biosynthesis; L-arginine biosynthesis; N(2)-acetyl-L-ornithine from L-glutamate: step 2/4.</text>
</comment>
<comment type="subcellular location">
    <subcellularLocation>
        <location evidence="1">Cytoplasm</location>
    </subcellularLocation>
</comment>
<comment type="similarity">
    <text evidence="1">Belongs to the acetylglutamate kinase family. ArgB subfamily.</text>
</comment>
<feature type="chain" id="PRO_0000112643" description="Acetylglutamate kinase">
    <location>
        <begin position="1"/>
        <end position="257"/>
    </location>
</feature>
<feature type="binding site" evidence="1">
    <location>
        <begin position="43"/>
        <end position="44"/>
    </location>
    <ligand>
        <name>substrate</name>
    </ligand>
</feature>
<feature type="binding site" evidence="1">
    <location>
        <position position="65"/>
    </location>
    <ligand>
        <name>substrate</name>
    </ligand>
</feature>
<feature type="binding site" evidence="1">
    <location>
        <position position="157"/>
    </location>
    <ligand>
        <name>substrate</name>
    </ligand>
</feature>
<feature type="site" description="Transition state stabilizer" evidence="1">
    <location>
        <position position="7"/>
    </location>
</feature>
<feature type="site" description="Transition state stabilizer" evidence="1">
    <location>
        <position position="216"/>
    </location>
</feature>
<organism>
    <name type="scientific">Pasteurella multocida (strain Pm70)</name>
    <dbReference type="NCBI Taxonomy" id="272843"/>
    <lineage>
        <taxon>Bacteria</taxon>
        <taxon>Pseudomonadati</taxon>
        <taxon>Pseudomonadota</taxon>
        <taxon>Gammaproteobacteria</taxon>
        <taxon>Pasteurellales</taxon>
        <taxon>Pasteurellaceae</taxon>
        <taxon>Pasteurella</taxon>
    </lineage>
</organism>
<keyword id="KW-0028">Amino-acid biosynthesis</keyword>
<keyword id="KW-0055">Arginine biosynthesis</keyword>
<keyword id="KW-0067">ATP-binding</keyword>
<keyword id="KW-0963">Cytoplasm</keyword>
<keyword id="KW-0418">Kinase</keyword>
<keyword id="KW-0547">Nucleotide-binding</keyword>
<keyword id="KW-1185">Reference proteome</keyword>
<keyword id="KW-0808">Transferase</keyword>
<dbReference type="EC" id="2.7.2.8" evidence="1"/>
<dbReference type="EMBL" id="AE004439">
    <property type="protein sequence ID" value="AAK03203.1"/>
    <property type="molecule type" value="Genomic_DNA"/>
</dbReference>
<dbReference type="RefSeq" id="WP_005754630.1">
    <property type="nucleotide sequence ID" value="NC_002663.1"/>
</dbReference>
<dbReference type="SMR" id="P57908"/>
<dbReference type="STRING" id="272843.PM1119"/>
<dbReference type="EnsemblBacteria" id="AAK03203">
    <property type="protein sequence ID" value="AAK03203"/>
    <property type="gene ID" value="PM1119"/>
</dbReference>
<dbReference type="KEGG" id="pmu:PM1119"/>
<dbReference type="HOGENOM" id="CLU_053680_1_1_6"/>
<dbReference type="OrthoDB" id="5915023at2"/>
<dbReference type="UniPathway" id="UPA00068">
    <property type="reaction ID" value="UER00107"/>
</dbReference>
<dbReference type="Proteomes" id="UP000000809">
    <property type="component" value="Chromosome"/>
</dbReference>
<dbReference type="GO" id="GO:0005737">
    <property type="term" value="C:cytoplasm"/>
    <property type="evidence" value="ECO:0007669"/>
    <property type="project" value="UniProtKB-SubCell"/>
</dbReference>
<dbReference type="GO" id="GO:0003991">
    <property type="term" value="F:acetylglutamate kinase activity"/>
    <property type="evidence" value="ECO:0007669"/>
    <property type="project" value="UniProtKB-UniRule"/>
</dbReference>
<dbReference type="GO" id="GO:0005524">
    <property type="term" value="F:ATP binding"/>
    <property type="evidence" value="ECO:0007669"/>
    <property type="project" value="UniProtKB-UniRule"/>
</dbReference>
<dbReference type="GO" id="GO:0042450">
    <property type="term" value="P:arginine biosynthetic process via ornithine"/>
    <property type="evidence" value="ECO:0007669"/>
    <property type="project" value="UniProtKB-UniRule"/>
</dbReference>
<dbReference type="GO" id="GO:0006526">
    <property type="term" value="P:L-arginine biosynthetic process"/>
    <property type="evidence" value="ECO:0007669"/>
    <property type="project" value="UniProtKB-UniPathway"/>
</dbReference>
<dbReference type="Gene3D" id="3.40.1160.10">
    <property type="entry name" value="Acetylglutamate kinase-like"/>
    <property type="match status" value="1"/>
</dbReference>
<dbReference type="HAMAP" id="MF_00082">
    <property type="entry name" value="ArgB"/>
    <property type="match status" value="1"/>
</dbReference>
<dbReference type="InterPro" id="IPR036393">
    <property type="entry name" value="AceGlu_kinase-like_sf"/>
</dbReference>
<dbReference type="InterPro" id="IPR004662">
    <property type="entry name" value="AcgluKinase_fam"/>
</dbReference>
<dbReference type="InterPro" id="IPR037528">
    <property type="entry name" value="ArgB"/>
</dbReference>
<dbReference type="InterPro" id="IPR001048">
    <property type="entry name" value="Asp/Glu/Uridylate_kinase"/>
</dbReference>
<dbReference type="NCBIfam" id="TIGR00761">
    <property type="entry name" value="argB"/>
    <property type="match status" value="1"/>
</dbReference>
<dbReference type="PANTHER" id="PTHR23342">
    <property type="entry name" value="N-ACETYLGLUTAMATE SYNTHASE"/>
    <property type="match status" value="1"/>
</dbReference>
<dbReference type="PANTHER" id="PTHR23342:SF0">
    <property type="entry name" value="N-ACETYLGLUTAMATE SYNTHASE, MITOCHONDRIAL"/>
    <property type="match status" value="1"/>
</dbReference>
<dbReference type="Pfam" id="PF00696">
    <property type="entry name" value="AA_kinase"/>
    <property type="match status" value="1"/>
</dbReference>
<dbReference type="PIRSF" id="PIRSF000728">
    <property type="entry name" value="NAGK"/>
    <property type="match status" value="1"/>
</dbReference>
<dbReference type="SUPFAM" id="SSF53633">
    <property type="entry name" value="Carbamate kinase-like"/>
    <property type="match status" value="1"/>
</dbReference>
<proteinExistence type="inferred from homology"/>